<keyword id="KW-1185">Reference proteome</keyword>
<keyword id="KW-0687">Ribonucleoprotein</keyword>
<keyword id="KW-0689">Ribosomal protein</keyword>
<reference key="1">
    <citation type="journal article" date="2002" name="Environ. Microbiol.">
        <title>Complete genome sequence and comparative analysis of the metabolically versatile Pseudomonas putida KT2440.</title>
        <authorList>
            <person name="Nelson K.E."/>
            <person name="Weinel C."/>
            <person name="Paulsen I.T."/>
            <person name="Dodson R.J."/>
            <person name="Hilbert H."/>
            <person name="Martins dos Santos V.A.P."/>
            <person name="Fouts D.E."/>
            <person name="Gill S.R."/>
            <person name="Pop M."/>
            <person name="Holmes M."/>
            <person name="Brinkac L.M."/>
            <person name="Beanan M.J."/>
            <person name="DeBoy R.T."/>
            <person name="Daugherty S.C."/>
            <person name="Kolonay J.F."/>
            <person name="Madupu R."/>
            <person name="Nelson W.C."/>
            <person name="White O."/>
            <person name="Peterson J.D."/>
            <person name="Khouri H.M."/>
            <person name="Hance I."/>
            <person name="Chris Lee P."/>
            <person name="Holtzapple E.K."/>
            <person name="Scanlan D."/>
            <person name="Tran K."/>
            <person name="Moazzez A."/>
            <person name="Utterback T.R."/>
            <person name="Rizzo M."/>
            <person name="Lee K."/>
            <person name="Kosack D."/>
            <person name="Moestl D."/>
            <person name="Wedler H."/>
            <person name="Lauber J."/>
            <person name="Stjepandic D."/>
            <person name="Hoheisel J."/>
            <person name="Straetz M."/>
            <person name="Heim S."/>
            <person name="Kiewitz C."/>
            <person name="Eisen J.A."/>
            <person name="Timmis K.N."/>
            <person name="Duesterhoeft A."/>
            <person name="Tuemmler B."/>
            <person name="Fraser C.M."/>
        </authorList>
    </citation>
    <scope>NUCLEOTIDE SEQUENCE [LARGE SCALE GENOMIC DNA]</scope>
    <source>
        <strain>ATCC 47054 / DSM 6125 / CFBP 8728 / NCIMB 11950 / KT2440</strain>
    </source>
</reference>
<name>RL36_PSEPK</name>
<accession>P61113</accession>
<accession>Q889V0</accession>
<accession>Q88QL4</accession>
<evidence type="ECO:0000255" key="1">
    <source>
        <dbReference type="HAMAP-Rule" id="MF_00251"/>
    </source>
</evidence>
<evidence type="ECO:0000305" key="2"/>
<sequence length="38" mass="4434">MKVRASVKKLCRNCKIIRREGVVRVICSAEPRHKQRQG</sequence>
<feature type="chain" id="PRO_0000126241" description="Large ribosomal subunit protein bL36">
    <location>
        <begin position="1"/>
        <end position="38"/>
    </location>
</feature>
<gene>
    <name evidence="1" type="primary">rpmJ</name>
    <name type="ordered locus">PP_0475</name>
</gene>
<protein>
    <recommendedName>
        <fullName evidence="1">Large ribosomal subunit protein bL36</fullName>
    </recommendedName>
    <alternativeName>
        <fullName evidence="2">50S ribosomal protein L36</fullName>
    </alternativeName>
</protein>
<proteinExistence type="inferred from homology"/>
<organism>
    <name type="scientific">Pseudomonas putida (strain ATCC 47054 / DSM 6125 / CFBP 8728 / NCIMB 11950 / KT2440)</name>
    <dbReference type="NCBI Taxonomy" id="160488"/>
    <lineage>
        <taxon>Bacteria</taxon>
        <taxon>Pseudomonadati</taxon>
        <taxon>Pseudomonadota</taxon>
        <taxon>Gammaproteobacteria</taxon>
        <taxon>Pseudomonadales</taxon>
        <taxon>Pseudomonadaceae</taxon>
        <taxon>Pseudomonas</taxon>
    </lineage>
</organism>
<dbReference type="EMBL" id="AE015451">
    <property type="protein sequence ID" value="AAN66105.1"/>
    <property type="molecule type" value="Genomic_DNA"/>
</dbReference>
<dbReference type="RefSeq" id="NP_742641.1">
    <property type="nucleotide sequence ID" value="NC_002947.4"/>
</dbReference>
<dbReference type="RefSeq" id="WP_002555468.1">
    <property type="nucleotide sequence ID" value="NZ_CP169744.1"/>
</dbReference>
<dbReference type="SMR" id="P61113"/>
<dbReference type="STRING" id="160488.PP_0475"/>
<dbReference type="PaxDb" id="160488-PP_0475"/>
<dbReference type="GeneID" id="98285417"/>
<dbReference type="KEGG" id="ppu:PP_0475"/>
<dbReference type="PATRIC" id="fig|160488.4.peg.507"/>
<dbReference type="eggNOG" id="COG0257">
    <property type="taxonomic scope" value="Bacteria"/>
</dbReference>
<dbReference type="HOGENOM" id="CLU_135723_6_2_6"/>
<dbReference type="OrthoDB" id="9802520at2"/>
<dbReference type="PhylomeDB" id="P61113"/>
<dbReference type="BioCyc" id="PPUT160488:G1G01-521-MONOMER"/>
<dbReference type="PRO" id="PR:P61113"/>
<dbReference type="Proteomes" id="UP000000556">
    <property type="component" value="Chromosome"/>
</dbReference>
<dbReference type="GO" id="GO:0005737">
    <property type="term" value="C:cytoplasm"/>
    <property type="evidence" value="ECO:0007669"/>
    <property type="project" value="UniProtKB-ARBA"/>
</dbReference>
<dbReference type="GO" id="GO:1990904">
    <property type="term" value="C:ribonucleoprotein complex"/>
    <property type="evidence" value="ECO:0007669"/>
    <property type="project" value="UniProtKB-KW"/>
</dbReference>
<dbReference type="GO" id="GO:0005840">
    <property type="term" value="C:ribosome"/>
    <property type="evidence" value="ECO:0007669"/>
    <property type="project" value="UniProtKB-KW"/>
</dbReference>
<dbReference type="GO" id="GO:0003735">
    <property type="term" value="F:structural constituent of ribosome"/>
    <property type="evidence" value="ECO:0007669"/>
    <property type="project" value="InterPro"/>
</dbReference>
<dbReference type="GO" id="GO:0006412">
    <property type="term" value="P:translation"/>
    <property type="evidence" value="ECO:0007669"/>
    <property type="project" value="UniProtKB-UniRule"/>
</dbReference>
<dbReference type="HAMAP" id="MF_00251">
    <property type="entry name" value="Ribosomal_bL36"/>
    <property type="match status" value="1"/>
</dbReference>
<dbReference type="InterPro" id="IPR000473">
    <property type="entry name" value="Ribosomal_bL36"/>
</dbReference>
<dbReference type="InterPro" id="IPR035977">
    <property type="entry name" value="Ribosomal_bL36_sp"/>
</dbReference>
<dbReference type="NCBIfam" id="TIGR01022">
    <property type="entry name" value="rpmJ_bact"/>
    <property type="match status" value="1"/>
</dbReference>
<dbReference type="PANTHER" id="PTHR42888">
    <property type="entry name" value="50S RIBOSOMAL PROTEIN L36, CHLOROPLASTIC"/>
    <property type="match status" value="1"/>
</dbReference>
<dbReference type="PANTHER" id="PTHR42888:SF1">
    <property type="entry name" value="LARGE RIBOSOMAL SUBUNIT PROTEIN BL36C"/>
    <property type="match status" value="1"/>
</dbReference>
<dbReference type="Pfam" id="PF00444">
    <property type="entry name" value="Ribosomal_L36"/>
    <property type="match status" value="1"/>
</dbReference>
<dbReference type="SUPFAM" id="SSF57840">
    <property type="entry name" value="Ribosomal protein L36"/>
    <property type="match status" value="1"/>
</dbReference>
<dbReference type="PROSITE" id="PS00828">
    <property type="entry name" value="RIBOSOMAL_L36"/>
    <property type="match status" value="1"/>
</dbReference>
<comment type="similarity">
    <text evidence="1">Belongs to the bacterial ribosomal protein bL36 family.</text>
</comment>